<name>SCH9_YEAST</name>
<keyword id="KW-0067">ATP-binding</keyword>
<keyword id="KW-0114">cAMP</keyword>
<keyword id="KW-0418">Kinase</keyword>
<keyword id="KW-0547">Nucleotide-binding</keyword>
<keyword id="KW-0597">Phosphoprotein</keyword>
<keyword id="KW-1185">Reference proteome</keyword>
<keyword id="KW-0723">Serine/threonine-protein kinase</keyword>
<keyword id="KW-0808">Transferase</keyword>
<reference key="1">
    <citation type="journal article" date="1988" name="Genes Dev.">
        <title>SCH9, a gene of Saccharomyces cerevisiae that encodes a protein distinct from, but functionally and structurally related to, cAMP-dependent protein kinase catalytic subunits.</title>
        <authorList>
            <person name="Toda T."/>
            <person name="Cameron S."/>
            <person name="Sass P."/>
            <person name="Wigler M."/>
        </authorList>
    </citation>
    <scope>NUCLEOTIDE SEQUENCE [GENOMIC DNA]</scope>
</reference>
<reference key="2">
    <citation type="journal article" date="1993" name="Yeast">
        <title>The SCH9 protein kinase mRNA contains a long 5' leader with a small open reading frame.</title>
        <authorList>
            <person name="di Blasi F."/>
            <person name="Carra E."/>
            <person name="de Vendittis E."/>
            <person name="Masturzo P."/>
            <person name="Burderi E."/>
            <person name="Lambrinoudaki I."/>
            <person name="Mirisola M.G."/>
            <person name="Seidita G."/>
            <person name="Fasano O."/>
        </authorList>
    </citation>
    <scope>NUCLEOTIDE SEQUENCE [GENOMIC DNA]</scope>
    <source>
        <strain>JR26-19D</strain>
    </source>
</reference>
<reference key="3">
    <citation type="journal article" date="1994" name="Science">
        <title>Complete nucleotide sequence of Saccharomyces cerevisiae chromosome VIII.</title>
        <authorList>
            <person name="Johnston M."/>
            <person name="Andrews S."/>
            <person name="Brinkman R."/>
            <person name="Cooper J."/>
            <person name="Ding H."/>
            <person name="Dover J."/>
            <person name="Du Z."/>
            <person name="Favello A."/>
            <person name="Fulton L."/>
            <person name="Gattung S."/>
            <person name="Geisel C."/>
            <person name="Kirsten J."/>
            <person name="Kucaba T."/>
            <person name="Hillier L.W."/>
            <person name="Jier M."/>
            <person name="Johnston L."/>
            <person name="Langston Y."/>
            <person name="Latreille P."/>
            <person name="Louis E.J."/>
            <person name="Macri C."/>
            <person name="Mardis E."/>
            <person name="Menezes S."/>
            <person name="Mouser L."/>
            <person name="Nhan M."/>
            <person name="Rifkin L."/>
            <person name="Riles L."/>
            <person name="St Peter H."/>
            <person name="Trevaskis E."/>
            <person name="Vaughan K."/>
            <person name="Vignati D."/>
            <person name="Wilcox L."/>
            <person name="Wohldman P."/>
            <person name="Waterston R."/>
            <person name="Wilson R."/>
            <person name="Vaudin M."/>
        </authorList>
    </citation>
    <scope>NUCLEOTIDE SEQUENCE [LARGE SCALE GENOMIC DNA]</scope>
    <source>
        <strain>ATCC 204508 / S288c</strain>
    </source>
</reference>
<reference key="4">
    <citation type="journal article" date="2014" name="G3 (Bethesda)">
        <title>The reference genome sequence of Saccharomyces cerevisiae: Then and now.</title>
        <authorList>
            <person name="Engel S.R."/>
            <person name="Dietrich F.S."/>
            <person name="Fisk D.G."/>
            <person name="Binkley G."/>
            <person name="Balakrishnan R."/>
            <person name="Costanzo M.C."/>
            <person name="Dwight S.S."/>
            <person name="Hitz B.C."/>
            <person name="Karra K."/>
            <person name="Nash R.S."/>
            <person name="Weng S."/>
            <person name="Wong E.D."/>
            <person name="Lloyd P."/>
            <person name="Skrzypek M.S."/>
            <person name="Miyasato S.R."/>
            <person name="Simison M."/>
            <person name="Cherry J.M."/>
        </authorList>
    </citation>
    <scope>GENOME REANNOTATION</scope>
    <source>
        <strain>ATCC 204508 / S288c</strain>
    </source>
</reference>
<reference key="5">
    <citation type="journal article" date="2003" name="Nature">
        <title>Global analysis of protein expression in yeast.</title>
        <authorList>
            <person name="Ghaemmaghami S."/>
            <person name="Huh W.-K."/>
            <person name="Bower K."/>
            <person name="Howson R.W."/>
            <person name="Belle A."/>
            <person name="Dephoure N."/>
            <person name="O'Shea E.K."/>
            <person name="Weissman J.S."/>
        </authorList>
    </citation>
    <scope>LEVEL OF PROTEIN EXPRESSION [LARGE SCALE ANALYSIS]</scope>
</reference>
<reference key="6">
    <citation type="journal article" date="2007" name="J. Proteome Res.">
        <title>Large-scale phosphorylation analysis of alpha-factor-arrested Saccharomyces cerevisiae.</title>
        <authorList>
            <person name="Li X."/>
            <person name="Gerber S.A."/>
            <person name="Rudner A.D."/>
            <person name="Beausoleil S.A."/>
            <person name="Haas W."/>
            <person name="Villen J."/>
            <person name="Elias J.E."/>
            <person name="Gygi S.P."/>
        </authorList>
    </citation>
    <scope>PHOSPHORYLATION [LARGE SCALE ANALYSIS] AT THR-723 AND SER-726</scope>
    <scope>IDENTIFICATION BY MASS SPECTROMETRY [LARGE SCALE ANALYSIS]</scope>
    <source>
        <strain>ADR376</strain>
    </source>
</reference>
<reference key="7">
    <citation type="journal article" date="2007" name="Mol. Cell">
        <title>Sch9 is a major target of TORC1 in Saccharomyces cerevisiae.</title>
        <authorList>
            <person name="Urban J."/>
            <person name="Soulard A."/>
            <person name="Huber A."/>
            <person name="Lippman S."/>
            <person name="Mukhopadhyay D."/>
            <person name="Deloche O."/>
            <person name="Wanke V."/>
            <person name="Anrather D."/>
            <person name="Ammerer G."/>
            <person name="Riezman H."/>
            <person name="Broach J.R."/>
            <person name="De Virgilio C."/>
            <person name="Hall M.N."/>
            <person name="Loewith R."/>
        </authorList>
    </citation>
    <scope>FUNCTION</scope>
    <scope>PHOSPHORYLATION AT THR-570; SER-711; THR-723; SER-726; THR-737; SER-758 AND SER-765</scope>
</reference>
<reference key="8">
    <citation type="journal article" date="2007" name="Proc. Natl. Acad. Sci. U.S.A.">
        <title>Analysis of phosphorylation sites on proteins from Saccharomyces cerevisiae by electron transfer dissociation (ETD) mass spectrometry.</title>
        <authorList>
            <person name="Chi A."/>
            <person name="Huttenhower C."/>
            <person name="Geer L.Y."/>
            <person name="Coon J.J."/>
            <person name="Syka J.E.P."/>
            <person name="Bai D.L."/>
            <person name="Shabanowitz J."/>
            <person name="Burke D.J."/>
            <person name="Troyanskaya O.G."/>
            <person name="Hunt D.F."/>
        </authorList>
    </citation>
    <scope>IDENTIFICATION BY MASS SPECTROMETRY [LARGE SCALE ANALYSIS]</scope>
</reference>
<reference key="9">
    <citation type="journal article" date="2008" name="Mol. Cell. Proteomics">
        <title>A multidimensional chromatography technology for in-depth phosphoproteome analysis.</title>
        <authorList>
            <person name="Albuquerque C.P."/>
            <person name="Smolka M.B."/>
            <person name="Payne S.H."/>
            <person name="Bafna V."/>
            <person name="Eng J."/>
            <person name="Zhou H."/>
        </authorList>
    </citation>
    <scope>PHOSPHORYLATION [LARGE SCALE ANALYSIS] AT SER-726</scope>
    <scope>IDENTIFICATION BY MASS SPECTROMETRY [LARGE SCALE ANALYSIS]</scope>
</reference>
<reference key="10">
    <citation type="journal article" date="2009" name="Science">
        <title>Global analysis of Cdk1 substrate phosphorylation sites provides insights into evolution.</title>
        <authorList>
            <person name="Holt L.J."/>
            <person name="Tuch B.B."/>
            <person name="Villen J."/>
            <person name="Johnson A.D."/>
            <person name="Gygi S.P."/>
            <person name="Morgan D.O."/>
        </authorList>
    </citation>
    <scope>PHOSPHORYLATION [LARGE SCALE ANALYSIS] AT THR-723 AND SER-726</scope>
    <scope>IDENTIFICATION BY MASS SPECTROMETRY [LARGE SCALE ANALYSIS]</scope>
</reference>
<reference key="11">
    <citation type="journal article" date="2010" name="Mol. Biol. Cell">
        <title>The rapamycin-sensitive phosphoproteome reveals that TOR controls protein kinase A toward some but not all substrates.</title>
        <authorList>
            <person name="Soulard A."/>
            <person name="Cremonesi A."/>
            <person name="Moes S."/>
            <person name="Schutz F."/>
            <person name="Jeno P."/>
            <person name="Hall M.N."/>
        </authorList>
    </citation>
    <scope>FUNCTION</scope>
</reference>
<reference key="12">
    <citation type="journal article" date="2017" name="Mol. Cell. Biol.">
        <title>An In vitro TORC1 kinase assay that recapitulates the Gtr-independent glutamine-responsive TORC1 activation mechanism on yeast vacuoles.</title>
        <authorList>
            <person name="Tanigawa M."/>
            <person name="Maeda T."/>
        </authorList>
    </citation>
    <scope>PHOSPHORYLATION</scope>
</reference>
<reference key="13">
    <citation type="journal article" date="2018" name="PLoS Genet.">
        <title>Gtr/Ego-independent TORC1 activation is achieved through a glutamine-sensitive interaction with Pib2 on the vacuolar membrane.</title>
        <authorList>
            <person name="Ukai H."/>
            <person name="Araki Y."/>
            <person name="Kira S."/>
            <person name="Oikawa Y."/>
            <person name="May A.I."/>
            <person name="Noda T."/>
        </authorList>
    </citation>
    <scope>PHOSPHORYLATION</scope>
</reference>
<reference key="14">
    <citation type="journal article" date="2020" name="J. Cell Sci.">
        <title>Amino acid homeostatic control by TORC1 in Saccharomyces cerevisiae under high hydrostatic pressure.</title>
        <authorList>
            <person name="Uemura S."/>
            <person name="Mochizuki T."/>
            <person name="Amemiya K."/>
            <person name="Kurosaka G."/>
            <person name="Yazawa M."/>
            <person name="Nakamoto K."/>
            <person name="Ishikawa Y."/>
            <person name="Izawa S."/>
            <person name="Abe F."/>
        </authorList>
    </citation>
    <scope>PHOSPHORYLATION</scope>
    <scope>DISRUPTION PHENOTYPE</scope>
    <scope>PHOSPHORYLATION AT THR-737</scope>
</reference>
<dbReference type="EC" id="2.7.11.1"/>
<dbReference type="EMBL" id="X12560">
    <property type="protein sequence ID" value="CAA31073.1"/>
    <property type="molecule type" value="Genomic_DNA"/>
</dbReference>
<dbReference type="EMBL" id="X57629">
    <property type="protein sequence ID" value="CAA40853.1"/>
    <property type="molecule type" value="Genomic_DNA"/>
</dbReference>
<dbReference type="EMBL" id="U00029">
    <property type="protein sequence ID" value="AAB69735.1"/>
    <property type="status" value="ALT_INIT"/>
    <property type="molecule type" value="Genomic_DNA"/>
</dbReference>
<dbReference type="EMBL" id="BK006934">
    <property type="protein sequence ID" value="DAA06898.1"/>
    <property type="molecule type" value="Genomic_DNA"/>
</dbReference>
<dbReference type="PIR" id="S48986">
    <property type="entry name" value="S48986"/>
</dbReference>
<dbReference type="RefSeq" id="NP_012075.1">
    <property type="nucleotide sequence ID" value="NM_001179336.1"/>
</dbReference>
<dbReference type="SMR" id="P11792"/>
<dbReference type="BioGRID" id="36639">
    <property type="interactions" value="716"/>
</dbReference>
<dbReference type="ELM" id="P11792"/>
<dbReference type="FunCoup" id="P11792">
    <property type="interactions" value="193"/>
</dbReference>
<dbReference type="IntAct" id="P11792">
    <property type="interactions" value="11"/>
</dbReference>
<dbReference type="MINT" id="P11792"/>
<dbReference type="STRING" id="4932.YHR205W"/>
<dbReference type="iPTMnet" id="P11792"/>
<dbReference type="PaxDb" id="4932-YHR205W"/>
<dbReference type="PeptideAtlas" id="P11792"/>
<dbReference type="EnsemblFungi" id="YHR205W_mRNA">
    <property type="protein sequence ID" value="YHR205W"/>
    <property type="gene ID" value="YHR205W"/>
</dbReference>
<dbReference type="GeneID" id="856612"/>
<dbReference type="KEGG" id="sce:YHR205W"/>
<dbReference type="AGR" id="SGD:S000001248"/>
<dbReference type="SGD" id="S000001248">
    <property type="gene designation" value="SCH9"/>
</dbReference>
<dbReference type="VEuPathDB" id="FungiDB:YHR205W"/>
<dbReference type="eggNOG" id="KOG0598">
    <property type="taxonomic scope" value="Eukaryota"/>
</dbReference>
<dbReference type="GeneTree" id="ENSGT00940000168810"/>
<dbReference type="HOGENOM" id="CLU_000288_52_2_1"/>
<dbReference type="InParanoid" id="P11792"/>
<dbReference type="OMA" id="SYAMGTT"/>
<dbReference type="OrthoDB" id="63267at2759"/>
<dbReference type="BioCyc" id="YEAST:G3O-31231-MONOMER"/>
<dbReference type="BRENDA" id="2.7.11.1">
    <property type="organism ID" value="984"/>
</dbReference>
<dbReference type="Reactome" id="R-SCE-1257604">
    <property type="pathway name" value="PIP3 activates AKT signaling"/>
</dbReference>
<dbReference type="Reactome" id="R-SCE-1474151">
    <property type="pathway name" value="Tetrahydrobiopterin (BH4) synthesis, recycling, salvage and regulation"/>
</dbReference>
<dbReference type="Reactome" id="R-SCE-165158">
    <property type="pathway name" value="Activation of AKT2"/>
</dbReference>
<dbReference type="Reactome" id="R-SCE-198693">
    <property type="pathway name" value="AKT phosphorylates targets in the nucleus"/>
</dbReference>
<dbReference type="Reactome" id="R-SCE-203615">
    <property type="pathway name" value="eNOS activation"/>
</dbReference>
<dbReference type="Reactome" id="R-SCE-389357">
    <property type="pathway name" value="CD28 dependent PI3K/Akt signaling"/>
</dbReference>
<dbReference type="Reactome" id="R-SCE-389513">
    <property type="pathway name" value="Co-inhibition by CTLA4"/>
</dbReference>
<dbReference type="Reactome" id="R-SCE-392451">
    <property type="pathway name" value="G beta:gamma signalling through PI3Kgamma"/>
</dbReference>
<dbReference type="Reactome" id="R-SCE-450385">
    <property type="pathway name" value="Butyrate Response Factor 1 (BRF1) binds and destabilizes mRNA"/>
</dbReference>
<dbReference type="Reactome" id="R-SCE-5218920">
    <property type="pathway name" value="VEGFR2 mediated vascular permeability"/>
</dbReference>
<dbReference type="Reactome" id="R-SCE-6804757">
    <property type="pathway name" value="Regulation of TP53 Degradation"/>
</dbReference>
<dbReference type="Reactome" id="R-SCE-6811558">
    <property type="pathway name" value="PI5P, PP2A and IER3 Regulate PI3K/AKT Signaling"/>
</dbReference>
<dbReference type="Reactome" id="R-SCE-9009391">
    <property type="pathway name" value="Extra-nuclear estrogen signaling"/>
</dbReference>
<dbReference type="Reactome" id="R-SCE-9031628">
    <property type="pathway name" value="NGF-stimulated transcription"/>
</dbReference>
<dbReference type="Reactome" id="R-SCE-9841251">
    <property type="pathway name" value="Mitochondrial unfolded protein response (UPRmt)"/>
</dbReference>
<dbReference type="Reactome" id="R-SCE-9856530">
    <property type="pathway name" value="High laminar flow shear stress activates signaling by PIEZO1 and PECAM1:CDH5:KDR in endothelial cells"/>
</dbReference>
<dbReference type="BioGRID-ORCS" id="856612">
    <property type="hits" value="5 hits in 13 CRISPR screens"/>
</dbReference>
<dbReference type="PRO" id="PR:P11792"/>
<dbReference type="Proteomes" id="UP000002311">
    <property type="component" value="Chromosome VIII"/>
</dbReference>
<dbReference type="RNAct" id="P11792">
    <property type="molecule type" value="protein"/>
</dbReference>
<dbReference type="GO" id="GO:0000785">
    <property type="term" value="C:chromatin"/>
    <property type="evidence" value="ECO:0000314"/>
    <property type="project" value="SGD"/>
</dbReference>
<dbReference type="GO" id="GO:0005737">
    <property type="term" value="C:cytoplasm"/>
    <property type="evidence" value="ECO:0000314"/>
    <property type="project" value="SGD"/>
</dbReference>
<dbReference type="GO" id="GO:0000329">
    <property type="term" value="C:fungal-type vacuole membrane"/>
    <property type="evidence" value="ECO:0000314"/>
    <property type="project" value="SGD"/>
</dbReference>
<dbReference type="GO" id="GO:0005634">
    <property type="term" value="C:nucleus"/>
    <property type="evidence" value="ECO:0000314"/>
    <property type="project" value="SGD"/>
</dbReference>
<dbReference type="GO" id="GO:0005524">
    <property type="term" value="F:ATP binding"/>
    <property type="evidence" value="ECO:0007669"/>
    <property type="project" value="UniProtKB-KW"/>
</dbReference>
<dbReference type="GO" id="GO:0106310">
    <property type="term" value="F:protein serine kinase activity"/>
    <property type="evidence" value="ECO:0007669"/>
    <property type="project" value="RHEA"/>
</dbReference>
<dbReference type="GO" id="GO:0004674">
    <property type="term" value="F:protein serine/threonine kinase activity"/>
    <property type="evidence" value="ECO:0000314"/>
    <property type="project" value="SGD"/>
</dbReference>
<dbReference type="GO" id="GO:0034599">
    <property type="term" value="P:cellular response to oxidative stress"/>
    <property type="evidence" value="ECO:0000315"/>
    <property type="project" value="SGD"/>
</dbReference>
<dbReference type="GO" id="GO:0035556">
    <property type="term" value="P:intracellular signal transduction"/>
    <property type="evidence" value="ECO:0000318"/>
    <property type="project" value="GO_Central"/>
</dbReference>
<dbReference type="GO" id="GO:1904828">
    <property type="term" value="P:positive regulation of hydrogen sulfide biosynthetic process"/>
    <property type="evidence" value="ECO:0000315"/>
    <property type="project" value="SGD"/>
</dbReference>
<dbReference type="GO" id="GO:0060963">
    <property type="term" value="P:positive regulation of ribosomal protein gene transcription by RNA polymerase II"/>
    <property type="evidence" value="ECO:0000315"/>
    <property type="project" value="SGD"/>
</dbReference>
<dbReference type="GO" id="GO:0045943">
    <property type="term" value="P:positive regulation of transcription by RNA polymerase I"/>
    <property type="evidence" value="ECO:0000315"/>
    <property type="project" value="SGD"/>
</dbReference>
<dbReference type="GO" id="GO:0045945">
    <property type="term" value="P:positive regulation of transcription by RNA polymerase III"/>
    <property type="evidence" value="ECO:0000315"/>
    <property type="project" value="SGD"/>
</dbReference>
<dbReference type="GO" id="GO:0008361">
    <property type="term" value="P:regulation of cell size"/>
    <property type="evidence" value="ECO:0007001"/>
    <property type="project" value="SGD"/>
</dbReference>
<dbReference type="GO" id="GO:1901494">
    <property type="term" value="P:regulation of cysteine metabolic process"/>
    <property type="evidence" value="ECO:0000315"/>
    <property type="project" value="SGD"/>
</dbReference>
<dbReference type="GO" id="GO:0032880">
    <property type="term" value="P:regulation of protein localization"/>
    <property type="evidence" value="ECO:0000315"/>
    <property type="project" value="SGD"/>
</dbReference>
<dbReference type="GO" id="GO:0047484">
    <property type="term" value="P:regulation of response to osmotic stress"/>
    <property type="evidence" value="ECO:0000315"/>
    <property type="project" value="SGD"/>
</dbReference>
<dbReference type="GO" id="GO:0090153">
    <property type="term" value="P:regulation of sphingolipid biosynthetic process"/>
    <property type="evidence" value="ECO:0000315"/>
    <property type="project" value="SGD"/>
</dbReference>
<dbReference type="GO" id="GO:0006357">
    <property type="term" value="P:regulation of transcription by RNA polymerase II"/>
    <property type="evidence" value="ECO:0000315"/>
    <property type="project" value="SGD"/>
</dbReference>
<dbReference type="CDD" id="cd05586">
    <property type="entry name" value="STKc_Sck1_like"/>
    <property type="match status" value="1"/>
</dbReference>
<dbReference type="CDD" id="cd11651">
    <property type="entry name" value="YPK1_N_like"/>
    <property type="match status" value="1"/>
</dbReference>
<dbReference type="FunFam" id="1.10.510.10:FF:000008">
    <property type="entry name" value="Non-specific serine/threonine protein kinase"/>
    <property type="match status" value="1"/>
</dbReference>
<dbReference type="FunFam" id="2.60.40.150:FF:000283">
    <property type="entry name" value="Non-specific serine/threonine protein kinase"/>
    <property type="match status" value="1"/>
</dbReference>
<dbReference type="FunFam" id="3.30.200.20:FF:000116">
    <property type="entry name" value="Non-specific serine/threonine protein kinase"/>
    <property type="match status" value="1"/>
</dbReference>
<dbReference type="Gene3D" id="2.60.40.150">
    <property type="entry name" value="C2 domain"/>
    <property type="match status" value="1"/>
</dbReference>
<dbReference type="Gene3D" id="3.30.200.20">
    <property type="entry name" value="Phosphorylase Kinase, domain 1"/>
    <property type="match status" value="1"/>
</dbReference>
<dbReference type="Gene3D" id="1.10.510.10">
    <property type="entry name" value="Transferase(Phosphotransferase) domain 1"/>
    <property type="match status" value="1"/>
</dbReference>
<dbReference type="InterPro" id="IPR000961">
    <property type="entry name" value="AGC-kinase_C"/>
</dbReference>
<dbReference type="InterPro" id="IPR000008">
    <property type="entry name" value="C2_dom"/>
</dbReference>
<dbReference type="InterPro" id="IPR035892">
    <property type="entry name" value="C2_domain_sf"/>
</dbReference>
<dbReference type="InterPro" id="IPR011009">
    <property type="entry name" value="Kinase-like_dom_sf"/>
</dbReference>
<dbReference type="InterPro" id="IPR017892">
    <property type="entry name" value="Pkinase_C"/>
</dbReference>
<dbReference type="InterPro" id="IPR000719">
    <property type="entry name" value="Prot_kinase_dom"/>
</dbReference>
<dbReference type="InterPro" id="IPR017441">
    <property type="entry name" value="Protein_kinase_ATP_BS"/>
</dbReference>
<dbReference type="InterPro" id="IPR008271">
    <property type="entry name" value="Ser/Thr_kinase_AS"/>
</dbReference>
<dbReference type="PANTHER" id="PTHR24351">
    <property type="entry name" value="RIBOSOMAL PROTEIN S6 KINASE"/>
    <property type="match status" value="1"/>
</dbReference>
<dbReference type="Pfam" id="PF00168">
    <property type="entry name" value="C2"/>
    <property type="match status" value="2"/>
</dbReference>
<dbReference type="Pfam" id="PF00069">
    <property type="entry name" value="Pkinase"/>
    <property type="match status" value="1"/>
</dbReference>
<dbReference type="Pfam" id="PF00433">
    <property type="entry name" value="Pkinase_C"/>
    <property type="match status" value="1"/>
</dbReference>
<dbReference type="SMART" id="SM00239">
    <property type="entry name" value="C2"/>
    <property type="match status" value="1"/>
</dbReference>
<dbReference type="SMART" id="SM00133">
    <property type="entry name" value="S_TK_X"/>
    <property type="match status" value="1"/>
</dbReference>
<dbReference type="SMART" id="SM00220">
    <property type="entry name" value="S_TKc"/>
    <property type="match status" value="1"/>
</dbReference>
<dbReference type="SUPFAM" id="SSF49562">
    <property type="entry name" value="C2 domain (Calcium/lipid-binding domain, CaLB)"/>
    <property type="match status" value="1"/>
</dbReference>
<dbReference type="SUPFAM" id="SSF56112">
    <property type="entry name" value="Protein kinase-like (PK-like)"/>
    <property type="match status" value="1"/>
</dbReference>
<dbReference type="PROSITE" id="PS51285">
    <property type="entry name" value="AGC_KINASE_CTER"/>
    <property type="match status" value="1"/>
</dbReference>
<dbReference type="PROSITE" id="PS50004">
    <property type="entry name" value="C2"/>
    <property type="match status" value="1"/>
</dbReference>
<dbReference type="PROSITE" id="PS00107">
    <property type="entry name" value="PROTEIN_KINASE_ATP"/>
    <property type="match status" value="1"/>
</dbReference>
<dbReference type="PROSITE" id="PS50011">
    <property type="entry name" value="PROTEIN_KINASE_DOM"/>
    <property type="match status" value="1"/>
</dbReference>
<dbReference type="PROSITE" id="PS00108">
    <property type="entry name" value="PROTEIN_KINASE_ST"/>
    <property type="match status" value="1"/>
</dbReference>
<gene>
    <name type="primary">SCH9</name>
    <name type="synonym">KOM1</name>
    <name type="ordered locus">YHR205W</name>
</gene>
<evidence type="ECO:0000255" key="1">
    <source>
        <dbReference type="PROSITE-ProRule" id="PRU00041"/>
    </source>
</evidence>
<evidence type="ECO:0000255" key="2">
    <source>
        <dbReference type="PROSITE-ProRule" id="PRU00159"/>
    </source>
</evidence>
<evidence type="ECO:0000255" key="3">
    <source>
        <dbReference type="PROSITE-ProRule" id="PRU00618"/>
    </source>
</evidence>
<evidence type="ECO:0000255" key="4">
    <source>
        <dbReference type="PROSITE-ProRule" id="PRU10027"/>
    </source>
</evidence>
<evidence type="ECO:0000256" key="5">
    <source>
        <dbReference type="SAM" id="MobiDB-lite"/>
    </source>
</evidence>
<evidence type="ECO:0000269" key="6">
    <source>
    </source>
</evidence>
<evidence type="ECO:0000269" key="7">
    <source>
    </source>
</evidence>
<evidence type="ECO:0000269" key="8">
    <source>
    </source>
</evidence>
<evidence type="ECO:0000269" key="9">
    <source>
    </source>
</evidence>
<evidence type="ECO:0000269" key="10">
    <source>
    </source>
</evidence>
<evidence type="ECO:0000269" key="11">
    <source>
    </source>
</evidence>
<evidence type="ECO:0000305" key="12"/>
<evidence type="ECO:0000305" key="13">
    <source>
    </source>
</evidence>
<evidence type="ECO:0007744" key="14">
    <source>
    </source>
</evidence>
<evidence type="ECO:0007744" key="15">
    <source>
    </source>
</evidence>
<evidence type="ECO:0007744" key="16">
    <source>
    </source>
</evidence>
<sequence length="824" mass="91812">MMNFFTSKSSNQDTGFSSQHQHPNGQNNGNNNSSTAGNDNGYPCKLVSSGPCASSNNGALFTNFTLQTATPTTAISQDLYAMGTTGITSENALFQMKSMNNGISSVNNNNSNTPTIITTSQEETNAGNVHGDTGGNSLQNSEDDNFSSSSTTKCLLSSTSSLSINQREAAAAAYGPDTDIPRGKLEVTIIEARDLVTRSKDSQPYVVCTFESSEFISNGPESLGAINNNNNNNNNNQHNQNQHINNNNENTNPDAASQHHNNNSGWNGSQLPSIKEHLKKKPLYTHRSSSQLDQLNSCSSVTDPSKRSSNSSSGSSNGPKNDSSHPIWHHKTTFDVLGSHSELDISVYDAAHDHMFLGQVRLYPMIHNLAHASQHQWHSLKPRVIDEVVSGDILIKWTYKQTKKRHYGPQDFEVLRLLGKGTFGQVYQVKKKDTQRIYAMKVLSKKVIVKKNEIAHTIGERNILVTTASKSSPFIVGLKFSFQTPTDLYLVTDYMSGGELFWHLQKEGRFSEDRAKFYIAELVLALEHLHDNDIVYRDLKPENILLDANGNIALCDFGLSKADLKDRTNTFCGTTEYLAPELLLDETGYTKMVDFWSLGVLIFEMCCGWSPFFAENNQKMYQKIAFGKVKFPRDVLSQEGRSFVKGLLNRNPKHRLGAIDDGRELRAHPFFADIDWEALKQKKIPPPFKPHLVSETDTSNFDPEFTTASTSYMNKHQPMMTATPLSPAMQAKFAGFTFVDESAIDEHVNNNRKFLQNSYFMEPGSFIPGNPNLPPDEDVIDDDGDEDINDGFNQEKNMNNSHSQMDFDGDQHMDDEFVSGRFEI</sequence>
<comment type="function">
    <text evidence="7 8">Protein kinase that is part of growth control pathway which is at least partially redundant with the cAMP pathway. Regulates both BCY1 phosphorylation and MPK1 activity (PubMed:20702584). Regulates ribosome biogenesis, translation initiation, and entry into stationary phase in a TORC1-dependent manner (PubMed:17560372).</text>
</comment>
<comment type="catalytic activity">
    <reaction>
        <text>L-seryl-[protein] + ATP = O-phospho-L-seryl-[protein] + ADP + H(+)</text>
        <dbReference type="Rhea" id="RHEA:17989"/>
        <dbReference type="Rhea" id="RHEA-COMP:9863"/>
        <dbReference type="Rhea" id="RHEA-COMP:11604"/>
        <dbReference type="ChEBI" id="CHEBI:15378"/>
        <dbReference type="ChEBI" id="CHEBI:29999"/>
        <dbReference type="ChEBI" id="CHEBI:30616"/>
        <dbReference type="ChEBI" id="CHEBI:83421"/>
        <dbReference type="ChEBI" id="CHEBI:456216"/>
        <dbReference type="EC" id="2.7.11.1"/>
    </reaction>
</comment>
<comment type="catalytic activity">
    <reaction>
        <text>L-threonyl-[protein] + ATP = O-phospho-L-threonyl-[protein] + ADP + H(+)</text>
        <dbReference type="Rhea" id="RHEA:46608"/>
        <dbReference type="Rhea" id="RHEA-COMP:11060"/>
        <dbReference type="Rhea" id="RHEA-COMP:11605"/>
        <dbReference type="ChEBI" id="CHEBI:15378"/>
        <dbReference type="ChEBI" id="CHEBI:30013"/>
        <dbReference type="ChEBI" id="CHEBI:30616"/>
        <dbReference type="ChEBI" id="CHEBI:61977"/>
        <dbReference type="ChEBI" id="CHEBI:456216"/>
        <dbReference type="EC" id="2.7.11.1"/>
    </reaction>
</comment>
<comment type="activity regulation">
    <text>Activated by cAMP.</text>
</comment>
<comment type="PTM">
    <text evidence="9 10 11">Phosphorylated by TORC1 in nutrient-replete conditions and during mechanical stress.</text>
</comment>
<comment type="disruption phenotype">
    <text evidence="11">Sensitive to high hydrostatic pressure (mechanical stress); simultaneous disruption of RRD1 exacerbates the effect.</text>
</comment>
<comment type="miscellaneous">
    <text evidence="6">Present with 3850 molecules/cell in log phase SD medium.</text>
</comment>
<comment type="similarity">
    <text evidence="12">Belongs to the protein kinase superfamily. AGC Ser/Thr protein kinase family. cAMP subfamily.</text>
</comment>
<comment type="caution">
    <text evidence="12">It is uncertain whether Met-1 or Met-2 is the initiator.</text>
</comment>
<comment type="sequence caution" evidence="12">
    <conflict type="erroneous initiation">
        <sequence resource="EMBL-CDS" id="AAB69735"/>
    </conflict>
</comment>
<protein>
    <recommendedName>
        <fullName>Serine/threonine-protein kinase SCH9</fullName>
        <ecNumber>2.7.11.1</ecNumber>
    </recommendedName>
</protein>
<proteinExistence type="evidence at protein level"/>
<feature type="chain" id="PRO_0000086638" description="Serine/threonine-protein kinase SCH9">
    <location>
        <begin position="1"/>
        <end position="824"/>
    </location>
</feature>
<feature type="domain" description="C2" evidence="1">
    <location>
        <begin position="166"/>
        <end position="378"/>
    </location>
</feature>
<feature type="domain" description="Protein kinase" evidence="2">
    <location>
        <begin position="412"/>
        <end position="671"/>
    </location>
</feature>
<feature type="domain" description="AGC-kinase C-terminal" evidence="3">
    <location>
        <begin position="672"/>
        <end position="748"/>
    </location>
</feature>
<feature type="region of interest" description="Disordered" evidence="5">
    <location>
        <begin position="1"/>
        <end position="37"/>
    </location>
</feature>
<feature type="region of interest" description="Disordered" evidence="5">
    <location>
        <begin position="125"/>
        <end position="152"/>
    </location>
</feature>
<feature type="region of interest" description="Disordered" evidence="5">
    <location>
        <begin position="221"/>
        <end position="272"/>
    </location>
</feature>
<feature type="region of interest" description="Disordered" evidence="5">
    <location>
        <begin position="285"/>
        <end position="327"/>
    </location>
</feature>
<feature type="compositionally biased region" description="Polar residues" evidence="5">
    <location>
        <begin position="1"/>
        <end position="23"/>
    </location>
</feature>
<feature type="compositionally biased region" description="Low complexity" evidence="5">
    <location>
        <begin position="24"/>
        <end position="37"/>
    </location>
</feature>
<feature type="compositionally biased region" description="Low complexity" evidence="5">
    <location>
        <begin position="226"/>
        <end position="248"/>
    </location>
</feature>
<feature type="compositionally biased region" description="Polar residues" evidence="5">
    <location>
        <begin position="249"/>
        <end position="272"/>
    </location>
</feature>
<feature type="compositionally biased region" description="Polar residues" evidence="5">
    <location>
        <begin position="286"/>
        <end position="302"/>
    </location>
</feature>
<feature type="compositionally biased region" description="Low complexity" evidence="5">
    <location>
        <begin position="307"/>
        <end position="321"/>
    </location>
</feature>
<feature type="active site" description="Proton acceptor" evidence="2 4">
    <location>
        <position position="538"/>
    </location>
</feature>
<feature type="binding site" evidence="2">
    <location>
        <begin position="418"/>
        <end position="426"/>
    </location>
    <ligand>
        <name>ATP</name>
        <dbReference type="ChEBI" id="CHEBI:30616"/>
    </ligand>
</feature>
<feature type="binding site" evidence="2">
    <location>
        <position position="441"/>
    </location>
    <ligand>
        <name>ATP</name>
        <dbReference type="ChEBI" id="CHEBI:30616"/>
    </ligand>
</feature>
<feature type="modified residue" description="Phosphothreonine; by PKH1 or PKH2" evidence="7">
    <location>
        <position position="570"/>
    </location>
</feature>
<feature type="modified residue" description="Phosphoserine; by TORC1" evidence="7">
    <location>
        <position position="711"/>
    </location>
</feature>
<feature type="modified residue" description="Phosphothreonine; by TORC1" evidence="7 14 16">
    <location>
        <position position="723"/>
    </location>
</feature>
<feature type="modified residue" description="Phosphoserine; by TORC1" evidence="7 14 15 16">
    <location>
        <position position="726"/>
    </location>
</feature>
<feature type="modified residue" description="Phosphothreonine; by TORC1" evidence="7 13">
    <location>
        <position position="737"/>
    </location>
</feature>
<feature type="modified residue" description="Phosphoserine; by TORC1" evidence="7">
    <location>
        <position position="758"/>
    </location>
</feature>
<feature type="modified residue" description="Phosphoserine; by TORC1" evidence="7">
    <location>
        <position position="765"/>
    </location>
</feature>
<feature type="sequence conflict" description="In Ref. 1; CAA31073." evidence="12" ref="1">
    <original>I</original>
    <variation>S</variation>
    <location>
        <position position="366"/>
    </location>
</feature>
<feature type="sequence conflict" description="In Ref. 1; CAA31073." evidence="12" ref="1">
    <original>N</original>
    <variation>K</variation>
    <location>
        <position position="751"/>
    </location>
</feature>
<organism>
    <name type="scientific">Saccharomyces cerevisiae (strain ATCC 204508 / S288c)</name>
    <name type="common">Baker's yeast</name>
    <dbReference type="NCBI Taxonomy" id="559292"/>
    <lineage>
        <taxon>Eukaryota</taxon>
        <taxon>Fungi</taxon>
        <taxon>Dikarya</taxon>
        <taxon>Ascomycota</taxon>
        <taxon>Saccharomycotina</taxon>
        <taxon>Saccharomycetes</taxon>
        <taxon>Saccharomycetales</taxon>
        <taxon>Saccharomycetaceae</taxon>
        <taxon>Saccharomyces</taxon>
    </lineage>
</organism>
<accession>P11792</accession>
<accession>D3DLF4</accession>